<proteinExistence type="inferred from homology"/>
<dbReference type="EMBL" id="L42023">
    <property type="protein sequence ID" value="AAC22756.1"/>
    <property type="molecule type" value="Genomic_DNA"/>
</dbReference>
<dbReference type="PIR" id="E64020">
    <property type="entry name" value="E64020"/>
</dbReference>
<dbReference type="RefSeq" id="NP_439258.1">
    <property type="nucleotide sequence ID" value="NC_000907.1"/>
</dbReference>
<dbReference type="SMR" id="P44113"/>
<dbReference type="STRING" id="71421.HI_1101"/>
<dbReference type="EnsemblBacteria" id="AAC22756">
    <property type="protein sequence ID" value="AAC22756"/>
    <property type="gene ID" value="HI_1101"/>
</dbReference>
<dbReference type="KEGG" id="hin:HI_1101"/>
<dbReference type="PATRIC" id="fig|71421.8.peg.1147"/>
<dbReference type="eggNOG" id="COG3115">
    <property type="taxonomic scope" value="Bacteria"/>
</dbReference>
<dbReference type="HOGENOM" id="CLU_030174_1_0_6"/>
<dbReference type="OrthoDB" id="7054914at2"/>
<dbReference type="PhylomeDB" id="P44113"/>
<dbReference type="BioCyc" id="HINF71421:G1GJ1-1136-MONOMER"/>
<dbReference type="Proteomes" id="UP000000579">
    <property type="component" value="Chromosome"/>
</dbReference>
<dbReference type="GO" id="GO:0032153">
    <property type="term" value="C:cell division site"/>
    <property type="evidence" value="ECO:0000318"/>
    <property type="project" value="GO_Central"/>
</dbReference>
<dbReference type="GO" id="GO:0005886">
    <property type="term" value="C:plasma membrane"/>
    <property type="evidence" value="ECO:0000318"/>
    <property type="project" value="GO_Central"/>
</dbReference>
<dbReference type="GO" id="GO:0000917">
    <property type="term" value="P:division septum assembly"/>
    <property type="evidence" value="ECO:0000318"/>
    <property type="project" value="GO_Central"/>
</dbReference>
<dbReference type="GO" id="GO:0043093">
    <property type="term" value="P:FtsZ-dependent cytokinesis"/>
    <property type="evidence" value="ECO:0007669"/>
    <property type="project" value="UniProtKB-UniRule"/>
</dbReference>
<dbReference type="CDD" id="cd00231">
    <property type="entry name" value="ZipA"/>
    <property type="match status" value="1"/>
</dbReference>
<dbReference type="Gene3D" id="3.30.1400.10">
    <property type="entry name" value="ZipA, C-terminal FtsZ-binding domain"/>
    <property type="match status" value="1"/>
</dbReference>
<dbReference type="HAMAP" id="MF_00509">
    <property type="entry name" value="ZipA"/>
    <property type="match status" value="1"/>
</dbReference>
<dbReference type="InterPro" id="IPR011919">
    <property type="entry name" value="Cell_div_ZipA"/>
</dbReference>
<dbReference type="InterPro" id="IPR007449">
    <property type="entry name" value="ZipA_FtsZ-bd_C"/>
</dbReference>
<dbReference type="InterPro" id="IPR036765">
    <property type="entry name" value="ZipA_FtsZ-bd_C_sf"/>
</dbReference>
<dbReference type="NCBIfam" id="TIGR02205">
    <property type="entry name" value="septum_zipA"/>
    <property type="match status" value="1"/>
</dbReference>
<dbReference type="PANTHER" id="PTHR38685">
    <property type="entry name" value="CELL DIVISION PROTEIN ZIPA"/>
    <property type="match status" value="1"/>
</dbReference>
<dbReference type="PANTHER" id="PTHR38685:SF1">
    <property type="entry name" value="CELL DIVISION PROTEIN ZIPA"/>
    <property type="match status" value="1"/>
</dbReference>
<dbReference type="Pfam" id="PF04354">
    <property type="entry name" value="ZipA_C"/>
    <property type="match status" value="1"/>
</dbReference>
<dbReference type="SMART" id="SM00771">
    <property type="entry name" value="ZipA_C"/>
    <property type="match status" value="1"/>
</dbReference>
<dbReference type="SUPFAM" id="SSF64383">
    <property type="entry name" value="Cell-division protein ZipA, C-terminal domain"/>
    <property type="match status" value="1"/>
</dbReference>
<evidence type="ECO:0000255" key="1">
    <source>
        <dbReference type="HAMAP-Rule" id="MF_00509"/>
    </source>
</evidence>
<evidence type="ECO:0000256" key="2">
    <source>
        <dbReference type="SAM" id="MobiDB-lite"/>
    </source>
</evidence>
<feature type="chain" id="PRO_0000214526" description="Cell division protein ZipA">
    <location>
        <begin position="1"/>
        <end position="328"/>
    </location>
</feature>
<feature type="topological domain" description="Periplasmic" evidence="1">
    <location>
        <begin position="1"/>
        <end position="4"/>
    </location>
</feature>
<feature type="transmembrane region" description="Helical" evidence="1">
    <location>
        <begin position="5"/>
        <end position="25"/>
    </location>
</feature>
<feature type="topological domain" description="Cytoplasmic" evidence="1">
    <location>
        <begin position="26"/>
        <end position="328"/>
    </location>
</feature>
<feature type="region of interest" description="Disordered" evidence="2">
    <location>
        <begin position="44"/>
        <end position="82"/>
    </location>
</feature>
<feature type="compositionally biased region" description="Polar residues" evidence="2">
    <location>
        <begin position="57"/>
        <end position="67"/>
    </location>
</feature>
<organism>
    <name type="scientific">Haemophilus influenzae (strain ATCC 51907 / DSM 11121 / KW20 / Rd)</name>
    <dbReference type="NCBI Taxonomy" id="71421"/>
    <lineage>
        <taxon>Bacteria</taxon>
        <taxon>Pseudomonadati</taxon>
        <taxon>Pseudomonadota</taxon>
        <taxon>Gammaproteobacteria</taxon>
        <taxon>Pasteurellales</taxon>
        <taxon>Pasteurellaceae</taxon>
        <taxon>Haemophilus</taxon>
    </lineage>
</organism>
<gene>
    <name evidence="1" type="primary">zipA</name>
    <name type="ordered locus">HI_1101</name>
</gene>
<accession>P44113</accession>
<name>ZIPA_HAEIN</name>
<protein>
    <recommendedName>
        <fullName evidence="1">Cell division protein ZipA</fullName>
    </recommendedName>
</protein>
<keyword id="KW-0131">Cell cycle</keyword>
<keyword id="KW-0132">Cell division</keyword>
<keyword id="KW-0997">Cell inner membrane</keyword>
<keyword id="KW-1003">Cell membrane</keyword>
<keyword id="KW-0472">Membrane</keyword>
<keyword id="KW-1185">Reference proteome</keyword>
<keyword id="KW-0812">Transmembrane</keyword>
<keyword id="KW-1133">Transmembrane helix</keyword>
<comment type="function">
    <text evidence="1">Essential cell division protein that stabilizes the FtsZ protofilaments by cross-linking them and that serves as a cytoplasmic membrane anchor for the Z ring. Also required for the recruitment to the septal ring of downstream cell division proteins.</text>
</comment>
<comment type="subunit">
    <text evidence="1">Interacts with FtsZ via their C-terminal domains.</text>
</comment>
<comment type="subcellular location">
    <subcellularLocation>
        <location evidence="1">Cell inner membrane</location>
        <topology evidence="1">Single-pass type I membrane protein</topology>
    </subcellularLocation>
    <text evidence="1">Localizes to the Z ring in an FtsZ-dependent manner.</text>
</comment>
<comment type="similarity">
    <text evidence="1">Belongs to the ZipA family.</text>
</comment>
<reference key="1">
    <citation type="journal article" date="1995" name="Science">
        <title>Whole-genome random sequencing and assembly of Haemophilus influenzae Rd.</title>
        <authorList>
            <person name="Fleischmann R.D."/>
            <person name="Adams M.D."/>
            <person name="White O."/>
            <person name="Clayton R.A."/>
            <person name="Kirkness E.F."/>
            <person name="Kerlavage A.R."/>
            <person name="Bult C.J."/>
            <person name="Tomb J.-F."/>
            <person name="Dougherty B.A."/>
            <person name="Merrick J.M."/>
            <person name="McKenney K."/>
            <person name="Sutton G.G."/>
            <person name="FitzHugh W."/>
            <person name="Fields C.A."/>
            <person name="Gocayne J.D."/>
            <person name="Scott J.D."/>
            <person name="Shirley R."/>
            <person name="Liu L.-I."/>
            <person name="Glodek A."/>
            <person name="Kelley J.M."/>
            <person name="Weidman J.F."/>
            <person name="Phillips C.A."/>
            <person name="Spriggs T."/>
            <person name="Hedblom E."/>
            <person name="Cotton M.D."/>
            <person name="Utterback T.R."/>
            <person name="Hanna M.C."/>
            <person name="Nguyen D.T."/>
            <person name="Saudek D.M."/>
            <person name="Brandon R.C."/>
            <person name="Fine L.D."/>
            <person name="Fritchman J.L."/>
            <person name="Fuhrmann J.L."/>
            <person name="Geoghagen N.S.M."/>
            <person name="Gnehm C.L."/>
            <person name="McDonald L.A."/>
            <person name="Small K.V."/>
            <person name="Fraser C.M."/>
            <person name="Smith H.O."/>
            <person name="Venter J.C."/>
        </authorList>
    </citation>
    <scope>NUCLEOTIDE SEQUENCE [LARGE SCALE GENOMIC DNA]</scope>
    <source>
        <strain>ATCC 51907 / DSM 11121 / KW20 / Rd</strain>
    </source>
</reference>
<sequence length="328" mass="36766">MDLNTILIIVGIVALVALIVHGLWSNRREKSKYFDKANKFDRTSLTSRSHTQEEMVQPNNISPNTYVENGHTPIPQPTTEKLPSEAELIDYRQSDKSVDDIKISIPNTQPIYDMGNHRSEPIQPTQPQYDMPTANNVASMTLEQLEAQSQNVGFNGINSSSPELRVQLAELSHEEHQVDYNLSFNEPKAETTAHPKQTTGYIQLYLIPKSSEEFNGAKLVQALENLGFILGKDEMYHRHLDLSVASPVLFSVANLEQPGTFNAYNLAEFNTIGIVLFMQLPSPGNNLANLRMMMRAAHTLAEDLQGVILTEEQEIFDANAEQAYLARV</sequence>